<accession>D1ZMW1</accession>
<accession>F7VZ82</accession>
<feature type="chain" id="PRO_0000409433" description="Tethering factor for nuclear proteasome STS1">
    <location>
        <begin position="1"/>
        <end position="304"/>
    </location>
</feature>
<feature type="region of interest" description="Disordered" evidence="2">
    <location>
        <begin position="1"/>
        <end position="66"/>
    </location>
</feature>
<feature type="compositionally biased region" description="Polar residues" evidence="2">
    <location>
        <begin position="46"/>
        <end position="63"/>
    </location>
</feature>
<evidence type="ECO:0000250" key="1"/>
<evidence type="ECO:0000256" key="2">
    <source>
        <dbReference type="SAM" id="MobiDB-lite"/>
    </source>
</evidence>
<evidence type="ECO:0000305" key="3"/>
<protein>
    <recommendedName>
        <fullName>Tethering factor for nuclear proteasome STS1</fullName>
    </recommendedName>
</protein>
<organism>
    <name type="scientific">Sordaria macrospora (strain ATCC MYA-333 / DSM 997 / K(L3346) / K-hell)</name>
    <dbReference type="NCBI Taxonomy" id="771870"/>
    <lineage>
        <taxon>Eukaryota</taxon>
        <taxon>Fungi</taxon>
        <taxon>Dikarya</taxon>
        <taxon>Ascomycota</taxon>
        <taxon>Pezizomycotina</taxon>
        <taxon>Sordariomycetes</taxon>
        <taxon>Sordariomycetidae</taxon>
        <taxon>Sordariales</taxon>
        <taxon>Sordariaceae</taxon>
        <taxon>Sordaria</taxon>
    </lineage>
</organism>
<reference key="1">
    <citation type="journal article" date="2010" name="PLoS Genet.">
        <title>De novo assembly of a 40 Mb eukaryotic genome from short sequence reads: Sordaria macrospora, a model organism for fungal morphogenesis.</title>
        <authorList>
            <person name="Nowrousian M."/>
            <person name="Stajich J.E."/>
            <person name="Chu M."/>
            <person name="Engh I."/>
            <person name="Espagne E."/>
            <person name="Halliday K."/>
            <person name="Kamerewerd J."/>
            <person name="Kempken F."/>
            <person name="Knab B."/>
            <person name="Kuo H.-C."/>
            <person name="Osiewacz H.D."/>
            <person name="Poeggeler S."/>
            <person name="Read N.D."/>
            <person name="Seiler S."/>
            <person name="Smith K.M."/>
            <person name="Zickler D."/>
            <person name="Kueck U."/>
            <person name="Freitag M."/>
        </authorList>
    </citation>
    <scope>NUCLEOTIDE SEQUENCE [LARGE SCALE GENOMIC DNA]</scope>
    <source>
        <strain>ATCC MYA-333 / DSM 997 / K(L3346) / K-hell</strain>
    </source>
</reference>
<keyword id="KW-0963">Cytoplasm</keyword>
<keyword id="KW-0539">Nucleus</keyword>
<keyword id="KW-0653">Protein transport</keyword>
<keyword id="KW-1185">Reference proteome</keyword>
<keyword id="KW-0813">Transport</keyword>
<dbReference type="EMBL" id="CABT02000014">
    <property type="protein sequence ID" value="CCC10829.1"/>
    <property type="molecule type" value="Genomic_DNA"/>
</dbReference>
<dbReference type="RefSeq" id="XP_003346369.1">
    <property type="nucleotide sequence ID" value="XM_003346321.1"/>
</dbReference>
<dbReference type="SMR" id="D1ZMW1"/>
<dbReference type="FunCoup" id="D1ZMW1">
    <property type="interactions" value="10"/>
</dbReference>
<dbReference type="STRING" id="771870.D1ZMW1"/>
<dbReference type="GeneID" id="10803760"/>
<dbReference type="KEGG" id="smp:10803760"/>
<dbReference type="VEuPathDB" id="FungiDB:SMAC_07846"/>
<dbReference type="eggNOG" id="ENOG502RNK4">
    <property type="taxonomic scope" value="Eukaryota"/>
</dbReference>
<dbReference type="HOGENOM" id="CLU_033658_0_0_1"/>
<dbReference type="InParanoid" id="D1ZMW1"/>
<dbReference type="OMA" id="DYTPHFL"/>
<dbReference type="OrthoDB" id="10061064at2759"/>
<dbReference type="Proteomes" id="UP000001881">
    <property type="component" value="Unassembled WGS sequence"/>
</dbReference>
<dbReference type="GO" id="GO:0005737">
    <property type="term" value="C:cytoplasm"/>
    <property type="evidence" value="ECO:0007669"/>
    <property type="project" value="UniProtKB-SubCell"/>
</dbReference>
<dbReference type="GO" id="GO:0031965">
    <property type="term" value="C:nuclear membrane"/>
    <property type="evidence" value="ECO:0007669"/>
    <property type="project" value="TreeGrafter"/>
</dbReference>
<dbReference type="GO" id="GO:0070628">
    <property type="term" value="F:proteasome binding"/>
    <property type="evidence" value="ECO:0007669"/>
    <property type="project" value="TreeGrafter"/>
</dbReference>
<dbReference type="GO" id="GO:0071630">
    <property type="term" value="P:nuclear protein quality control by the ubiquitin-proteasome system"/>
    <property type="evidence" value="ECO:0007669"/>
    <property type="project" value="InterPro"/>
</dbReference>
<dbReference type="GO" id="GO:0031144">
    <property type="term" value="P:proteasome localization"/>
    <property type="evidence" value="ECO:0007669"/>
    <property type="project" value="InterPro"/>
</dbReference>
<dbReference type="GO" id="GO:0015031">
    <property type="term" value="P:protein transport"/>
    <property type="evidence" value="ECO:0007669"/>
    <property type="project" value="UniProtKB-KW"/>
</dbReference>
<dbReference type="FunFam" id="1.20.58.1590:FF:000001">
    <property type="entry name" value="Tethering factor for nuclear proteasome STS1"/>
    <property type="match status" value="1"/>
</dbReference>
<dbReference type="Gene3D" id="1.20.58.1590">
    <property type="entry name" value="Tethering factor for nuclear proteasome Cut8/Sts1"/>
    <property type="match status" value="1"/>
</dbReference>
<dbReference type="InterPro" id="IPR013868">
    <property type="entry name" value="Cut8/Sts1_fam"/>
</dbReference>
<dbReference type="InterPro" id="IPR038422">
    <property type="entry name" value="Cut8/Sts1_sf"/>
</dbReference>
<dbReference type="PANTHER" id="PTHR28032">
    <property type="entry name" value="FI02826P"/>
    <property type="match status" value="1"/>
</dbReference>
<dbReference type="PANTHER" id="PTHR28032:SF1">
    <property type="entry name" value="FI02826P"/>
    <property type="match status" value="1"/>
</dbReference>
<dbReference type="Pfam" id="PF08559">
    <property type="entry name" value="Cut8"/>
    <property type="match status" value="1"/>
</dbReference>
<comment type="function">
    <text evidence="1">Involved in ubiquitin-mediated protein degradation. Regulatory factor in the ubiquitin/proteasome pathway that controls the turnover of proteasome substrates. Targets proteasomes to the nucleus and facilitates the degradation of nuclear proteins (By similarity).</text>
</comment>
<comment type="subunit">
    <text evidence="1">Binds the proteasome.</text>
</comment>
<comment type="subcellular location">
    <subcellularLocation>
        <location evidence="1">Cytoplasm</location>
    </subcellularLocation>
    <subcellularLocation>
        <location evidence="1">Nucleus</location>
    </subcellularLocation>
</comment>
<comment type="similarity">
    <text evidence="3">Belongs to the cut8/STS1 family.</text>
</comment>
<sequence>MNVLLSPQPLFFPHQHEPSRRSPPRTMSHYTMTSRKRKADDDDNEMSVSPTGSPAINPRQLSRPSKKVRAGIELAGRPLPLPRLLETLDKTQLRAVLQTICERHPDIGHEVMTSAPRPSVNGALEVLGEYQDKLRAAIPFGNSSSEYTYYRVKQPLMALVDALGDFTPQFLPPVEQQTTVSLEYLNHATKIIHDLPDFDSQQYRHHKDGAYDEISRAWALVITEAAKRGGGFHLHNGKWDQVLAKHNQQSGGKLEQAMNAMVNEVGWIGANQNAHGQGSSSDPNSILNQLINGTYGAPVQVGPF</sequence>
<proteinExistence type="inferred from homology"/>
<name>STS1_SORMK</name>
<gene>
    <name type="primary">STS1</name>
    <name type="ORF">SMAC_07846</name>
</gene>